<accession>B9IT45</accession>
<comment type="function">
    <text evidence="1">RNaseP catalyzes the removal of the 5'-leader sequence from pre-tRNA to produce the mature 5'-terminus. It can also cleave other RNA substrates such as 4.5S RNA. The protein component plays an auxiliary but essential role in vivo by binding to the 5'-leader sequence and broadening the substrate specificity of the ribozyme.</text>
</comment>
<comment type="catalytic activity">
    <reaction evidence="1">
        <text>Endonucleolytic cleavage of RNA, removing 5'-extranucleotides from tRNA precursor.</text>
        <dbReference type="EC" id="3.1.26.5"/>
    </reaction>
</comment>
<comment type="subunit">
    <text evidence="1">Consists of a catalytic RNA component (M1 or rnpB) and a protein subunit.</text>
</comment>
<comment type="similarity">
    <text evidence="1">Belongs to the RnpA family.</text>
</comment>
<protein>
    <recommendedName>
        <fullName evidence="1">Ribonuclease P protein component</fullName>
        <shortName evidence="1">RNase P protein</shortName>
        <shortName evidence="1">RNaseP protein</shortName>
        <ecNumber evidence="1">3.1.26.5</ecNumber>
    </recommendedName>
    <alternativeName>
        <fullName evidence="1">Protein C5</fullName>
    </alternativeName>
</protein>
<name>RNPA_BACCQ</name>
<keyword id="KW-0255">Endonuclease</keyword>
<keyword id="KW-0378">Hydrolase</keyword>
<keyword id="KW-0540">Nuclease</keyword>
<keyword id="KW-0694">RNA-binding</keyword>
<keyword id="KW-0819">tRNA processing</keyword>
<proteinExistence type="inferred from homology"/>
<dbReference type="EC" id="3.1.26.5" evidence="1"/>
<dbReference type="EMBL" id="CP000227">
    <property type="protein sequence ID" value="ACM15733.1"/>
    <property type="molecule type" value="Genomic_DNA"/>
</dbReference>
<dbReference type="SMR" id="B9IT45"/>
<dbReference type="KEGG" id="bcq:BCQ_5337"/>
<dbReference type="HOGENOM" id="CLU_117179_9_1_9"/>
<dbReference type="Proteomes" id="UP000000441">
    <property type="component" value="Chromosome"/>
</dbReference>
<dbReference type="GO" id="GO:0030677">
    <property type="term" value="C:ribonuclease P complex"/>
    <property type="evidence" value="ECO:0007669"/>
    <property type="project" value="TreeGrafter"/>
</dbReference>
<dbReference type="GO" id="GO:0042781">
    <property type="term" value="F:3'-tRNA processing endoribonuclease activity"/>
    <property type="evidence" value="ECO:0007669"/>
    <property type="project" value="TreeGrafter"/>
</dbReference>
<dbReference type="GO" id="GO:0004526">
    <property type="term" value="F:ribonuclease P activity"/>
    <property type="evidence" value="ECO:0007669"/>
    <property type="project" value="UniProtKB-UniRule"/>
</dbReference>
<dbReference type="GO" id="GO:0000049">
    <property type="term" value="F:tRNA binding"/>
    <property type="evidence" value="ECO:0007669"/>
    <property type="project" value="UniProtKB-UniRule"/>
</dbReference>
<dbReference type="GO" id="GO:0001682">
    <property type="term" value="P:tRNA 5'-leader removal"/>
    <property type="evidence" value="ECO:0007669"/>
    <property type="project" value="UniProtKB-UniRule"/>
</dbReference>
<dbReference type="FunFam" id="3.30.230.10:FF:000021">
    <property type="entry name" value="Ribonuclease P protein component"/>
    <property type="match status" value="1"/>
</dbReference>
<dbReference type="Gene3D" id="3.30.230.10">
    <property type="match status" value="1"/>
</dbReference>
<dbReference type="HAMAP" id="MF_00227">
    <property type="entry name" value="RNase_P"/>
    <property type="match status" value="1"/>
</dbReference>
<dbReference type="InterPro" id="IPR020568">
    <property type="entry name" value="Ribosomal_Su5_D2-typ_SF"/>
</dbReference>
<dbReference type="InterPro" id="IPR014721">
    <property type="entry name" value="Ribsml_uS5_D2-typ_fold_subgr"/>
</dbReference>
<dbReference type="InterPro" id="IPR000100">
    <property type="entry name" value="RNase_P"/>
</dbReference>
<dbReference type="InterPro" id="IPR020539">
    <property type="entry name" value="RNase_P_CS"/>
</dbReference>
<dbReference type="NCBIfam" id="TIGR00188">
    <property type="entry name" value="rnpA"/>
    <property type="match status" value="1"/>
</dbReference>
<dbReference type="PANTHER" id="PTHR33992">
    <property type="entry name" value="RIBONUCLEASE P PROTEIN COMPONENT"/>
    <property type="match status" value="1"/>
</dbReference>
<dbReference type="PANTHER" id="PTHR33992:SF1">
    <property type="entry name" value="RIBONUCLEASE P PROTEIN COMPONENT"/>
    <property type="match status" value="1"/>
</dbReference>
<dbReference type="Pfam" id="PF00825">
    <property type="entry name" value="Ribonuclease_P"/>
    <property type="match status" value="1"/>
</dbReference>
<dbReference type="SUPFAM" id="SSF54211">
    <property type="entry name" value="Ribosomal protein S5 domain 2-like"/>
    <property type="match status" value="1"/>
</dbReference>
<dbReference type="PROSITE" id="PS00648">
    <property type="entry name" value="RIBONUCLEASE_P"/>
    <property type="match status" value="1"/>
</dbReference>
<feature type="chain" id="PRO_1000194607" description="Ribonuclease P protein component">
    <location>
        <begin position="1"/>
        <end position="115"/>
    </location>
</feature>
<evidence type="ECO:0000255" key="1">
    <source>
        <dbReference type="HAMAP-Rule" id="MF_00227"/>
    </source>
</evidence>
<reference key="1">
    <citation type="journal article" date="2009" name="J. Bacteriol.">
        <title>Complete genome sequence of the extremophilic Bacillus cereus strain Q1 with industrial applications.</title>
        <authorList>
            <person name="Xiong Z."/>
            <person name="Jiang Y."/>
            <person name="Qi D."/>
            <person name="Lu H."/>
            <person name="Yang F."/>
            <person name="Yang J."/>
            <person name="Chen L."/>
            <person name="Sun L."/>
            <person name="Xu X."/>
            <person name="Xue Y."/>
            <person name="Zhu Y."/>
            <person name="Jin Q."/>
        </authorList>
    </citation>
    <scope>NUCLEOTIDE SEQUENCE [LARGE SCALE GENOMIC DNA]</scope>
    <source>
        <strain>Q1</strain>
    </source>
</reference>
<organism>
    <name type="scientific">Bacillus cereus (strain Q1)</name>
    <dbReference type="NCBI Taxonomy" id="361100"/>
    <lineage>
        <taxon>Bacteria</taxon>
        <taxon>Bacillati</taxon>
        <taxon>Bacillota</taxon>
        <taxon>Bacilli</taxon>
        <taxon>Bacillales</taxon>
        <taxon>Bacillaceae</taxon>
        <taxon>Bacillus</taxon>
        <taxon>Bacillus cereus group</taxon>
    </lineage>
</organism>
<gene>
    <name evidence="1" type="primary">rnpA</name>
    <name type="ordered locus">BCQ_5337</name>
</gene>
<sequence>MKKKHRIKKNDEFQTVFQKGKSTANRQFVVYQLDKEEQPNFRIGLSVSKKIGNAVVRNRIKRMIRQSITELKDEIDSGKDFVIIARKPCAEMTYEEVKKSLIHVFKRSGMKRIKK</sequence>